<comment type="function">
    <text>Brain peptide responsible for activation of prothoracic glands to produce ecdysone in insects.</text>
</comment>
<comment type="subunit">
    <text>Heterodimer of a B chain and an A chain linked by two disulfide bonds.</text>
</comment>
<comment type="subcellular location">
    <subcellularLocation>
        <location>Secreted</location>
    </subcellularLocation>
</comment>
<comment type="miscellaneous">
    <text>Silk worm has two kinds of PTTH: 4K-PTTH and 22K-PTTH; there are many forms of 4K-PTTH.</text>
</comment>
<comment type="similarity">
    <text evidence="3">Belongs to the insulin family.</text>
</comment>
<accession>P26740</accession>
<protein>
    <recommendedName>
        <fullName>Bombyxin B-6</fullName>
        <shortName>BBX-B6</shortName>
    </recommendedName>
    <alternativeName>
        <fullName>4K-prothoracicotropic hormone</fullName>
        <shortName>4K-PTTH</shortName>
    </alternativeName>
    <component>
        <recommendedName>
            <fullName>Bombyxin B-6 B chain</fullName>
        </recommendedName>
    </component>
    <component>
        <recommendedName>
            <fullName>Bombyxin B-6 A chain</fullName>
        </recommendedName>
    </component>
</protein>
<dbReference type="EMBL" id="D00781">
    <property type="protein sequence ID" value="BAA00677.1"/>
    <property type="molecule type" value="Genomic_DNA"/>
</dbReference>
<dbReference type="PIR" id="S69486">
    <property type="entry name" value="S69486"/>
</dbReference>
<dbReference type="RefSeq" id="NP_001121795.1">
    <property type="nucleotide sequence ID" value="NM_001128323.1"/>
</dbReference>
<dbReference type="EnsemblMetazoa" id="NM_001128323.1">
    <property type="protein sequence ID" value="NP_001121795.1"/>
    <property type="gene ID" value="GeneID_100169723"/>
</dbReference>
<dbReference type="GeneID" id="100169723"/>
<dbReference type="KEGG" id="bmor:100169723"/>
<dbReference type="CTD" id="100169723"/>
<dbReference type="HOGENOM" id="CLU_125164_2_0_1"/>
<dbReference type="InParanoid" id="P26740"/>
<dbReference type="OrthoDB" id="493443at7088"/>
<dbReference type="Proteomes" id="UP000005204">
    <property type="component" value="Unassembled WGS sequence"/>
</dbReference>
<dbReference type="GO" id="GO:0005615">
    <property type="term" value="C:extracellular space"/>
    <property type="evidence" value="ECO:0007669"/>
    <property type="project" value="InterPro"/>
</dbReference>
<dbReference type="GO" id="GO:0008083">
    <property type="term" value="F:growth factor activity"/>
    <property type="evidence" value="ECO:0007669"/>
    <property type="project" value="InterPro"/>
</dbReference>
<dbReference type="GO" id="GO:0005179">
    <property type="term" value="F:hormone activity"/>
    <property type="evidence" value="ECO:0007669"/>
    <property type="project" value="UniProtKB-KW"/>
</dbReference>
<dbReference type="GO" id="GO:0005159">
    <property type="term" value="F:insulin-like growth factor receptor binding"/>
    <property type="evidence" value="ECO:0007669"/>
    <property type="project" value="TreeGrafter"/>
</dbReference>
<dbReference type="GO" id="GO:0043539">
    <property type="term" value="F:protein serine/threonine kinase activator activity"/>
    <property type="evidence" value="ECO:0007669"/>
    <property type="project" value="TreeGrafter"/>
</dbReference>
<dbReference type="GO" id="GO:0042104">
    <property type="term" value="P:positive regulation of activated T cell proliferation"/>
    <property type="evidence" value="ECO:0007669"/>
    <property type="project" value="TreeGrafter"/>
</dbReference>
<dbReference type="GO" id="GO:0046628">
    <property type="term" value="P:positive regulation of insulin receptor signaling pathway"/>
    <property type="evidence" value="ECO:0007669"/>
    <property type="project" value="TreeGrafter"/>
</dbReference>
<dbReference type="GO" id="GO:0043410">
    <property type="term" value="P:positive regulation of MAPK cascade"/>
    <property type="evidence" value="ECO:0007669"/>
    <property type="project" value="TreeGrafter"/>
</dbReference>
<dbReference type="GO" id="GO:0045944">
    <property type="term" value="P:positive regulation of transcription by RNA polymerase II"/>
    <property type="evidence" value="ECO:0007669"/>
    <property type="project" value="TreeGrafter"/>
</dbReference>
<dbReference type="GO" id="GO:1905564">
    <property type="term" value="P:positive regulation of vascular endothelial cell proliferation"/>
    <property type="evidence" value="ECO:0007669"/>
    <property type="project" value="TreeGrafter"/>
</dbReference>
<dbReference type="GO" id="GO:0051147">
    <property type="term" value="P:regulation of muscle cell differentiation"/>
    <property type="evidence" value="ECO:0007669"/>
    <property type="project" value="TreeGrafter"/>
</dbReference>
<dbReference type="CDD" id="cd04366">
    <property type="entry name" value="IlGF_insulin_bombyxin_like"/>
    <property type="match status" value="1"/>
</dbReference>
<dbReference type="Gene3D" id="1.10.100.10">
    <property type="entry name" value="Insulin-like"/>
    <property type="match status" value="1"/>
</dbReference>
<dbReference type="InterPro" id="IPR017097">
    <property type="entry name" value="Bombyxin"/>
</dbReference>
<dbReference type="InterPro" id="IPR027285">
    <property type="entry name" value="Bombyxin_B"/>
</dbReference>
<dbReference type="InterPro" id="IPR016179">
    <property type="entry name" value="Insulin-like"/>
</dbReference>
<dbReference type="InterPro" id="IPR036438">
    <property type="entry name" value="Insulin-like_sf"/>
</dbReference>
<dbReference type="InterPro" id="IPR022353">
    <property type="entry name" value="Insulin_CS"/>
</dbReference>
<dbReference type="InterPro" id="IPR022352">
    <property type="entry name" value="Insulin_family"/>
</dbReference>
<dbReference type="PANTHER" id="PTHR46886">
    <property type="entry name" value="INSULIN-LIKE GROWTH FACTOR II"/>
    <property type="match status" value="1"/>
</dbReference>
<dbReference type="PANTHER" id="PTHR46886:SF1">
    <property type="entry name" value="INSULIN-LIKE GROWTH FACTOR II"/>
    <property type="match status" value="1"/>
</dbReference>
<dbReference type="Pfam" id="PF00049">
    <property type="entry name" value="Insulin"/>
    <property type="match status" value="1"/>
</dbReference>
<dbReference type="PIRSF" id="PIRSF037038">
    <property type="entry name" value="Bombyxin"/>
    <property type="match status" value="1"/>
</dbReference>
<dbReference type="PIRSF" id="PIRSF500313">
    <property type="entry name" value="Bombyxin_B"/>
    <property type="match status" value="1"/>
</dbReference>
<dbReference type="PRINTS" id="PR02003">
    <property type="entry name" value="BOMBYXIN"/>
</dbReference>
<dbReference type="PRINTS" id="PR00276">
    <property type="entry name" value="INSULINFAMLY"/>
</dbReference>
<dbReference type="SMART" id="SM00078">
    <property type="entry name" value="IlGF"/>
    <property type="match status" value="1"/>
</dbReference>
<dbReference type="SUPFAM" id="SSF56994">
    <property type="entry name" value="Insulin-like"/>
    <property type="match status" value="1"/>
</dbReference>
<dbReference type="PROSITE" id="PS00262">
    <property type="entry name" value="INSULIN"/>
    <property type="match status" value="1"/>
</dbReference>
<feature type="signal peptide" evidence="2">
    <location>
        <begin position="1"/>
        <end position="20"/>
    </location>
</feature>
<feature type="peptide" id="PRO_0000016004" description="Bombyxin B-6 B chain">
    <location>
        <begin position="21"/>
        <end position="46"/>
    </location>
</feature>
<feature type="propeptide" id="PRO_0000016005" description="C peptide like">
    <location>
        <begin position="49"/>
        <end position="67"/>
    </location>
</feature>
<feature type="peptide" id="PRO_0000016006" description="Bombyxin B-6 A chain">
    <location>
        <begin position="70"/>
        <end position="90"/>
    </location>
</feature>
<feature type="disulfide bond" description="Interchain (between B and A chains)" evidence="1">
    <location>
        <begin position="30"/>
        <end position="76"/>
    </location>
</feature>
<feature type="disulfide bond" description="Interchain (between B and A chains)" evidence="1">
    <location>
        <begin position="42"/>
        <end position="89"/>
    </location>
</feature>
<feature type="disulfide bond" evidence="1">
    <location>
        <begin position="75"/>
        <end position="80"/>
    </location>
</feature>
<keyword id="KW-0165">Cleavage on pair of basic residues</keyword>
<keyword id="KW-1015">Disulfide bond</keyword>
<keyword id="KW-0372">Hormone</keyword>
<keyword id="KW-1185">Reference proteome</keyword>
<keyword id="KW-0964">Secreted</keyword>
<keyword id="KW-0732">Signal</keyword>
<evidence type="ECO:0000250" key="1"/>
<evidence type="ECO:0000255" key="2"/>
<evidence type="ECO:0000305" key="3"/>
<sequence>MMKTSVMFMLVVVISLMCSSEAQEVARTYCGRDLADTLADLCFGVEKRGVAQYAPYFWTRQYLGSRGKRGVVDECCFRPCTLDVLLSYCG</sequence>
<name>BXB6_BOMMO</name>
<proteinExistence type="inferred from homology"/>
<organism>
    <name type="scientific">Bombyx mori</name>
    <name type="common">Silk moth</name>
    <dbReference type="NCBI Taxonomy" id="7091"/>
    <lineage>
        <taxon>Eukaryota</taxon>
        <taxon>Metazoa</taxon>
        <taxon>Ecdysozoa</taxon>
        <taxon>Arthropoda</taxon>
        <taxon>Hexapoda</taxon>
        <taxon>Insecta</taxon>
        <taxon>Pterygota</taxon>
        <taxon>Neoptera</taxon>
        <taxon>Endopterygota</taxon>
        <taxon>Lepidoptera</taxon>
        <taxon>Glossata</taxon>
        <taxon>Ditrysia</taxon>
        <taxon>Bombycoidea</taxon>
        <taxon>Bombycidae</taxon>
        <taxon>Bombycinae</taxon>
        <taxon>Bombyx</taxon>
    </lineage>
</organism>
<reference key="1">
    <citation type="journal article" date="1996" name="J. Mol. Biol.">
        <title>Multiple gene copies for bombyxin, an insulin-related peptide of the silkmoth Bombyx mori: structural signs for gene rearrangement and duplication responsible for generation of multiple molecular forms of bombyxin.</title>
        <authorList>
            <person name="Kondo H."/>
            <person name="Ino M."/>
            <person name="Suzuki A."/>
            <person name="Ishizaki H."/>
            <person name="Iwami M."/>
        </authorList>
    </citation>
    <scope>NUCLEOTIDE SEQUENCE [GENOMIC DNA]</scope>
</reference>
<gene>
    <name type="primary">BBXB6</name>
</gene>